<reference key="1">
    <citation type="journal article" date="2005" name="Nucleic Acids Res.">
        <title>Genome dynamics and diversity of Shigella species, the etiologic agents of bacillary dysentery.</title>
        <authorList>
            <person name="Yang F."/>
            <person name="Yang J."/>
            <person name="Zhang X."/>
            <person name="Chen L."/>
            <person name="Jiang Y."/>
            <person name="Yan Y."/>
            <person name="Tang X."/>
            <person name="Wang J."/>
            <person name="Xiong Z."/>
            <person name="Dong J."/>
            <person name="Xue Y."/>
            <person name="Zhu Y."/>
            <person name="Xu X."/>
            <person name="Sun L."/>
            <person name="Chen S."/>
            <person name="Nie H."/>
            <person name="Peng J."/>
            <person name="Xu J."/>
            <person name="Wang Y."/>
            <person name="Yuan Z."/>
            <person name="Wen Y."/>
            <person name="Yao Z."/>
            <person name="Shen Y."/>
            <person name="Qiang B."/>
            <person name="Hou Y."/>
            <person name="Yu J."/>
            <person name="Jin Q."/>
        </authorList>
    </citation>
    <scope>NUCLEOTIDE SEQUENCE [LARGE SCALE GENOMIC DNA]</scope>
    <source>
        <strain>Ss046</strain>
    </source>
</reference>
<organism>
    <name type="scientific">Shigella sonnei (strain Ss046)</name>
    <dbReference type="NCBI Taxonomy" id="300269"/>
    <lineage>
        <taxon>Bacteria</taxon>
        <taxon>Pseudomonadati</taxon>
        <taxon>Pseudomonadota</taxon>
        <taxon>Gammaproteobacteria</taxon>
        <taxon>Enterobacterales</taxon>
        <taxon>Enterobacteriaceae</taxon>
        <taxon>Shigella</taxon>
    </lineage>
</organism>
<proteinExistence type="inferred from homology"/>
<accession>Q3YVN5</accession>
<feature type="chain" id="PRO_0000265894" description="ATP synthase epsilon chain">
    <location>
        <begin position="1"/>
        <end position="139"/>
    </location>
</feature>
<gene>
    <name evidence="1" type="primary">atpC</name>
    <name type="ordered locus">SSON_3888</name>
</gene>
<sequence>MAMTYHLDVVSAEQQMFSGLVEKIQVTGSEGELGIYPGHAPLLTAIKPGMIRIVKQHGHEEFIYLSGGILEVQPGNVTVLADTAIRGQDLDEARAMEAKRKAEEHISSSHGDVDYAQASAELAKAIAQLRVIELTKKAM</sequence>
<keyword id="KW-0066">ATP synthesis</keyword>
<keyword id="KW-0997">Cell inner membrane</keyword>
<keyword id="KW-1003">Cell membrane</keyword>
<keyword id="KW-0139">CF(1)</keyword>
<keyword id="KW-0375">Hydrogen ion transport</keyword>
<keyword id="KW-0406">Ion transport</keyword>
<keyword id="KW-0472">Membrane</keyword>
<keyword id="KW-1185">Reference proteome</keyword>
<keyword id="KW-0813">Transport</keyword>
<protein>
    <recommendedName>
        <fullName evidence="1">ATP synthase epsilon chain</fullName>
    </recommendedName>
    <alternativeName>
        <fullName evidence="1">ATP synthase F1 sector epsilon subunit</fullName>
    </alternativeName>
    <alternativeName>
        <fullName evidence="1">F-ATPase epsilon subunit</fullName>
    </alternativeName>
</protein>
<comment type="function">
    <text evidence="1">Produces ATP from ADP in the presence of a proton gradient across the membrane.</text>
</comment>
<comment type="subunit">
    <text>F-type ATPases have 2 components, CF(1) - the catalytic core - and CF(0) - the membrane proton channel. CF(1) has five subunits: alpha(3), beta(3), gamma(1), delta(1), epsilon(1). CF(0) has three main subunits: a, b and c.</text>
</comment>
<comment type="subcellular location">
    <subcellularLocation>
        <location evidence="1">Cell inner membrane</location>
        <topology evidence="1">Peripheral membrane protein</topology>
    </subcellularLocation>
</comment>
<comment type="similarity">
    <text evidence="1">Belongs to the ATPase epsilon chain family.</text>
</comment>
<dbReference type="EMBL" id="CP000038">
    <property type="protein sequence ID" value="AAZ90427.1"/>
    <property type="molecule type" value="Genomic_DNA"/>
</dbReference>
<dbReference type="RefSeq" id="WP_001251965.1">
    <property type="nucleotide sequence ID" value="NC_007384.1"/>
</dbReference>
<dbReference type="SMR" id="Q3YVN5"/>
<dbReference type="KEGG" id="ssn:SSON_3888"/>
<dbReference type="HOGENOM" id="CLU_084338_2_0_6"/>
<dbReference type="Proteomes" id="UP000002529">
    <property type="component" value="Chromosome"/>
</dbReference>
<dbReference type="GO" id="GO:0005886">
    <property type="term" value="C:plasma membrane"/>
    <property type="evidence" value="ECO:0007669"/>
    <property type="project" value="UniProtKB-SubCell"/>
</dbReference>
<dbReference type="GO" id="GO:0045259">
    <property type="term" value="C:proton-transporting ATP synthase complex"/>
    <property type="evidence" value="ECO:0007669"/>
    <property type="project" value="UniProtKB-KW"/>
</dbReference>
<dbReference type="GO" id="GO:0005524">
    <property type="term" value="F:ATP binding"/>
    <property type="evidence" value="ECO:0007669"/>
    <property type="project" value="UniProtKB-UniRule"/>
</dbReference>
<dbReference type="GO" id="GO:0046933">
    <property type="term" value="F:proton-transporting ATP synthase activity, rotational mechanism"/>
    <property type="evidence" value="ECO:0007669"/>
    <property type="project" value="UniProtKB-UniRule"/>
</dbReference>
<dbReference type="CDD" id="cd12152">
    <property type="entry name" value="F1-ATPase_delta"/>
    <property type="match status" value="1"/>
</dbReference>
<dbReference type="FunFam" id="1.20.5.440:FF:000001">
    <property type="entry name" value="ATP synthase epsilon chain"/>
    <property type="match status" value="1"/>
</dbReference>
<dbReference type="FunFam" id="2.60.15.10:FF:000001">
    <property type="entry name" value="ATP synthase epsilon chain"/>
    <property type="match status" value="1"/>
</dbReference>
<dbReference type="Gene3D" id="1.20.5.440">
    <property type="entry name" value="ATP synthase delta/epsilon subunit, C-terminal domain"/>
    <property type="match status" value="1"/>
</dbReference>
<dbReference type="Gene3D" id="2.60.15.10">
    <property type="entry name" value="F0F1 ATP synthase delta/epsilon subunit, N-terminal"/>
    <property type="match status" value="1"/>
</dbReference>
<dbReference type="HAMAP" id="MF_00530">
    <property type="entry name" value="ATP_synth_epsil_bac"/>
    <property type="match status" value="1"/>
</dbReference>
<dbReference type="InterPro" id="IPR036794">
    <property type="entry name" value="ATP_F1_dsu/esu_C_sf"/>
</dbReference>
<dbReference type="InterPro" id="IPR001469">
    <property type="entry name" value="ATP_synth_F1_dsu/esu"/>
</dbReference>
<dbReference type="InterPro" id="IPR020546">
    <property type="entry name" value="ATP_synth_F1_dsu/esu_N"/>
</dbReference>
<dbReference type="InterPro" id="IPR020547">
    <property type="entry name" value="ATP_synth_F1_esu_C"/>
</dbReference>
<dbReference type="InterPro" id="IPR036771">
    <property type="entry name" value="ATPsynth_dsu/esu_N"/>
</dbReference>
<dbReference type="NCBIfam" id="TIGR01216">
    <property type="entry name" value="ATP_synt_epsi"/>
    <property type="match status" value="1"/>
</dbReference>
<dbReference type="NCBIfam" id="NF001847">
    <property type="entry name" value="PRK00571.1-4"/>
    <property type="match status" value="1"/>
</dbReference>
<dbReference type="PANTHER" id="PTHR13822">
    <property type="entry name" value="ATP SYNTHASE DELTA/EPSILON CHAIN"/>
    <property type="match status" value="1"/>
</dbReference>
<dbReference type="PANTHER" id="PTHR13822:SF10">
    <property type="entry name" value="ATP SYNTHASE EPSILON CHAIN, CHLOROPLASTIC"/>
    <property type="match status" value="1"/>
</dbReference>
<dbReference type="Pfam" id="PF00401">
    <property type="entry name" value="ATP-synt_DE"/>
    <property type="match status" value="1"/>
</dbReference>
<dbReference type="Pfam" id="PF02823">
    <property type="entry name" value="ATP-synt_DE_N"/>
    <property type="match status" value="1"/>
</dbReference>
<dbReference type="SUPFAM" id="SSF46604">
    <property type="entry name" value="Epsilon subunit of F1F0-ATP synthase C-terminal domain"/>
    <property type="match status" value="1"/>
</dbReference>
<dbReference type="SUPFAM" id="SSF51344">
    <property type="entry name" value="Epsilon subunit of F1F0-ATP synthase N-terminal domain"/>
    <property type="match status" value="1"/>
</dbReference>
<evidence type="ECO:0000255" key="1">
    <source>
        <dbReference type="HAMAP-Rule" id="MF_00530"/>
    </source>
</evidence>
<name>ATPE_SHISS</name>